<name>LOX3B_DANRE</name>
<sequence length="807" mass="90191">MELHQWCRHIIVFLLNVWIPSCFAQTTPPARSSPTPTPQTADNPDSLKFRLSGFPRKHNEGRIEVFYKGEWGTICDDDFSLANAHVLCRQLGFVSATGWTHSAKYGKGAGKIWLDNVQCSGSERSVSVCKSRGWGNSDCTHDEDAGVICKDERLPGFVDSNVIEVQVDENRVEEVRLRPVFTTATKRMPVTEGVVEVKNKDGWAQICDIGWTPKNTHVVCGMMGFPHEKKVNKNFYKLYAERQKNFFLVHSVACLGTEVHLAACPLEFNYGNATESCPGGMPAVVSCVPGPLYTQSPTMKKKLKMPPTTRLKGGAKYGEGRVEVLKGSEWGTVCDDRWNLVSASVVCREMGFGSAKEALTGASMGKGLGPIHMNEVQCTGNERSLWSCRYKNITAEDCKHTEDASVRCNVPYMGYEKTVRILGGRTRYEGRVEVLHREADGTLRWGLICGEGWGTQEAMVLCRQLGLGYANHGLQVRLSGGRSPYEGRVEVRVGQRWGSVCSEGWSTKEAMVLCRQLGLGFSMHAITETWYWDSSNVTDMVMSGVKCTGDEMSISQCQHHRTVNCQKAAARFAAGVICSETASDLVLNAPLVQQTTYIEDRPLHMLYCAAEEDCLSKSAASANWPYGHRRLLRFSSQIHNIGRADFRPKAGRHSWVWHACHGHYHSMDIFTHYDLMSANGTKVAEGHKASFCLEDTDCDEGVSKRYKCANFGEQGITVGCWDLYRHDIDCQWIDITDVKPGNYILQVVINPNYEVSESDFTNNAMKCNCKYDGHRIWVHNCHIGDAFSEEAEKKFEKYPGQLNNQIS</sequence>
<proteinExistence type="evidence at transcript level"/>
<organism>
    <name type="scientific">Danio rerio</name>
    <name type="common">Zebrafish</name>
    <name type="synonym">Brachydanio rerio</name>
    <dbReference type="NCBI Taxonomy" id="7955"/>
    <lineage>
        <taxon>Eukaryota</taxon>
        <taxon>Metazoa</taxon>
        <taxon>Chordata</taxon>
        <taxon>Craniata</taxon>
        <taxon>Vertebrata</taxon>
        <taxon>Euteleostomi</taxon>
        <taxon>Actinopterygii</taxon>
        <taxon>Neopterygii</taxon>
        <taxon>Teleostei</taxon>
        <taxon>Ostariophysi</taxon>
        <taxon>Cypriniformes</taxon>
        <taxon>Danionidae</taxon>
        <taxon>Danioninae</taxon>
        <taxon>Danio</taxon>
    </lineage>
</organism>
<evidence type="ECO:0000250" key="1">
    <source>
        <dbReference type="UniProtKB" id="P16636"/>
    </source>
</evidence>
<evidence type="ECO:0000250" key="2">
    <source>
        <dbReference type="UniProtKB" id="P33072"/>
    </source>
</evidence>
<evidence type="ECO:0000250" key="3">
    <source>
        <dbReference type="UniProtKB" id="P58215"/>
    </source>
</evidence>
<evidence type="ECO:0000250" key="4">
    <source>
        <dbReference type="UniProtKB" id="Q9Z175"/>
    </source>
</evidence>
<evidence type="ECO:0000255" key="5"/>
<evidence type="ECO:0000255" key="6">
    <source>
        <dbReference type="PROSITE-ProRule" id="PRU00196"/>
    </source>
</evidence>
<evidence type="ECO:0000255" key="7">
    <source>
        <dbReference type="PROSITE-ProRule" id="PRU00498"/>
    </source>
</evidence>
<evidence type="ECO:0000269" key="8">
    <source>
    </source>
</evidence>
<evidence type="ECO:0000303" key="9">
    <source>
    </source>
</evidence>
<evidence type="ECO:0000305" key="10"/>
<evidence type="ECO:0000312" key="11">
    <source>
        <dbReference type="ZFIN" id="ZDB-GENE-030131-8210"/>
    </source>
</evidence>
<accession>B8A4W9</accession>
<accession>A4QP70</accession>
<accession>A6MH33</accession>
<accession>B8A5R6</accession>
<accession>B8A5R8</accession>
<accession>E7EY82</accession>
<accession>Q5CZM0</accession>
<gene>
    <name evidence="9 11" type="primary">loxl3b</name>
</gene>
<comment type="function">
    <text evidence="3 4 8">Protein-lysine 6-oxidase that mediates the oxidation of peptidyl lysine residues to allysine in target proteins (By similarity). Catalyzes the post-translational oxidative deamination of peptidyl lysine residues in precursors of elastin and different types of collagens, a prerequisite in the formation of cross-links between collagens and elastin (By similarity). Can mediate oxidation of lysine residues that are acetylated (By similarity). Also able to catalyze deacetylation of lysine residues (By similarity). Required for maturation of neural crest derived cartilage elements (PubMed:21244857).</text>
</comment>
<comment type="catalytic activity">
    <reaction evidence="3">
        <text>L-lysyl-[protein] + O2 + H2O = (S)-2-amino-6-oxohexanoyl-[protein] + H2O2 + NH4(+)</text>
        <dbReference type="Rhea" id="RHEA:24544"/>
        <dbReference type="Rhea" id="RHEA-COMP:9752"/>
        <dbReference type="Rhea" id="RHEA-COMP:12448"/>
        <dbReference type="ChEBI" id="CHEBI:15377"/>
        <dbReference type="ChEBI" id="CHEBI:15379"/>
        <dbReference type="ChEBI" id="CHEBI:16240"/>
        <dbReference type="ChEBI" id="CHEBI:28938"/>
        <dbReference type="ChEBI" id="CHEBI:29969"/>
        <dbReference type="ChEBI" id="CHEBI:131803"/>
        <dbReference type="EC" id="1.4.3.13"/>
    </reaction>
</comment>
<comment type="catalytic activity">
    <reaction evidence="3">
        <text>N(6)-acetyl-L-lysyl-[protein] + O2 + H2O = acetamide + (S)-2-amino-6-oxohexanoyl-[protein] + H2O2</text>
        <dbReference type="Rhea" id="RHEA:51648"/>
        <dbReference type="Rhea" id="RHEA-COMP:10731"/>
        <dbReference type="Rhea" id="RHEA-COMP:12448"/>
        <dbReference type="ChEBI" id="CHEBI:15377"/>
        <dbReference type="ChEBI" id="CHEBI:15379"/>
        <dbReference type="ChEBI" id="CHEBI:16240"/>
        <dbReference type="ChEBI" id="CHEBI:27856"/>
        <dbReference type="ChEBI" id="CHEBI:61930"/>
        <dbReference type="ChEBI" id="CHEBI:131803"/>
    </reaction>
</comment>
<comment type="cofactor">
    <cofactor evidence="1">
        <name>Cu cation</name>
        <dbReference type="ChEBI" id="CHEBI:23378"/>
    </cofactor>
</comment>
<comment type="cofactor">
    <cofactor evidence="2">
        <name>lysine tyrosylquinone residue</name>
        <dbReference type="ChEBI" id="CHEBI:20489"/>
    </cofactor>
    <text evidence="2">Contains 1 lysine tyrosylquinone.</text>
</comment>
<comment type="subcellular location">
    <subcellularLocation>
        <location evidence="4">Secreted</location>
        <location evidence="4">Extracellular space</location>
    </subcellularLocation>
    <subcellularLocation>
        <location evidence="3">Cytoplasm</location>
    </subcellularLocation>
    <subcellularLocation>
        <location evidence="3">Nucleus</location>
    </subcellularLocation>
    <text evidence="3">It is unclear how loxl3b is both intracellular (cytoplasmic and nuclear) and extracellular: it contains a clear signal sequence and is predicted to localize in the extracellular medium. However, the intracellular location is clearly reported and at least another protein of the family (loxl2) also has intracellular and extracellular localization despite the presence of a signal sequence.</text>
</comment>
<comment type="alternative products">
    <event type="alternative splicing"/>
    <isoform>
        <id>B8A4W9-1</id>
        <name>1</name>
        <sequence type="displayed"/>
    </isoform>
    <isoform>
        <id>B8A4W9-2</id>
        <name>2</name>
        <sequence type="described" ref="VSP_058831"/>
    </isoform>
</comment>
<comment type="developmental stage">
    <text evidence="8">Expressed in the notochord from the 10 somite stage. Highly expressed in head mesenchyme and developing cartilages that will form the craniofacial skeleton.</text>
</comment>
<comment type="PTM">
    <text evidence="2">The lysine tyrosylquinone cross-link (LTQ) is generated by condensation of the epsilon-amino group of a lysine with a topaquinone produced by oxidation of tyrosine.</text>
</comment>
<comment type="disruption phenotype">
    <text evidence="8">Craniofacial defects. Cartilage elements embryos do not mature and chondrocyte morphology and extracellular matrix are affected.</text>
</comment>
<comment type="similarity">
    <text evidence="10">Belongs to the lysyl oxidase family.</text>
</comment>
<comment type="sequence caution" evidence="10">
    <conflict type="miscellaneous discrepancy">
        <sequence resource="EMBL-CDS" id="AAH90801"/>
    </conflict>
    <text>Contaminating sequence. Potential poly-A sequence.</text>
</comment>
<protein>
    <recommendedName>
        <fullName evidence="10">Lysyl oxidase homolog 3B</fullName>
        <ecNumber evidence="3">1.4.3.-</ecNumber>
        <ecNumber evidence="3">1.4.3.13</ecNumber>
    </recommendedName>
    <alternativeName>
        <fullName evidence="10">Lysyl oxidase-like protein 3B</fullName>
    </alternativeName>
</protein>
<reference key="1">
    <citation type="journal article" date="2013" name="Nature">
        <title>The zebrafish reference genome sequence and its relationship to the human genome.</title>
        <authorList>
            <person name="Howe K."/>
            <person name="Clark M.D."/>
            <person name="Torroja C.F."/>
            <person name="Torrance J."/>
            <person name="Berthelot C."/>
            <person name="Muffato M."/>
            <person name="Collins J.E."/>
            <person name="Humphray S."/>
            <person name="McLaren K."/>
            <person name="Matthews L."/>
            <person name="McLaren S."/>
            <person name="Sealy I."/>
            <person name="Caccamo M."/>
            <person name="Churcher C."/>
            <person name="Scott C."/>
            <person name="Barrett J.C."/>
            <person name="Koch R."/>
            <person name="Rauch G.J."/>
            <person name="White S."/>
            <person name="Chow W."/>
            <person name="Kilian B."/>
            <person name="Quintais L.T."/>
            <person name="Guerra-Assuncao J.A."/>
            <person name="Zhou Y."/>
            <person name="Gu Y."/>
            <person name="Yen J."/>
            <person name="Vogel J.H."/>
            <person name="Eyre T."/>
            <person name="Redmond S."/>
            <person name="Banerjee R."/>
            <person name="Chi J."/>
            <person name="Fu B."/>
            <person name="Langley E."/>
            <person name="Maguire S.F."/>
            <person name="Laird G.K."/>
            <person name="Lloyd D."/>
            <person name="Kenyon E."/>
            <person name="Donaldson S."/>
            <person name="Sehra H."/>
            <person name="Almeida-King J."/>
            <person name="Loveland J."/>
            <person name="Trevanion S."/>
            <person name="Jones M."/>
            <person name="Quail M."/>
            <person name="Willey D."/>
            <person name="Hunt A."/>
            <person name="Burton J."/>
            <person name="Sims S."/>
            <person name="McLay K."/>
            <person name="Plumb B."/>
            <person name="Davis J."/>
            <person name="Clee C."/>
            <person name="Oliver K."/>
            <person name="Clark R."/>
            <person name="Riddle C."/>
            <person name="Elliot D."/>
            <person name="Threadgold G."/>
            <person name="Harden G."/>
            <person name="Ware D."/>
            <person name="Begum S."/>
            <person name="Mortimore B."/>
            <person name="Kerry G."/>
            <person name="Heath P."/>
            <person name="Phillimore B."/>
            <person name="Tracey A."/>
            <person name="Corby N."/>
            <person name="Dunn M."/>
            <person name="Johnson C."/>
            <person name="Wood J."/>
            <person name="Clark S."/>
            <person name="Pelan S."/>
            <person name="Griffiths G."/>
            <person name="Smith M."/>
            <person name="Glithero R."/>
            <person name="Howden P."/>
            <person name="Barker N."/>
            <person name="Lloyd C."/>
            <person name="Stevens C."/>
            <person name="Harley J."/>
            <person name="Holt K."/>
            <person name="Panagiotidis G."/>
            <person name="Lovell J."/>
            <person name="Beasley H."/>
            <person name="Henderson C."/>
            <person name="Gordon D."/>
            <person name="Auger K."/>
            <person name="Wright D."/>
            <person name="Collins J."/>
            <person name="Raisen C."/>
            <person name="Dyer L."/>
            <person name="Leung K."/>
            <person name="Robertson L."/>
            <person name="Ambridge K."/>
            <person name="Leongamornlert D."/>
            <person name="McGuire S."/>
            <person name="Gilderthorp R."/>
            <person name="Griffiths C."/>
            <person name="Manthravadi D."/>
            <person name="Nichol S."/>
            <person name="Barker G."/>
            <person name="Whitehead S."/>
            <person name="Kay M."/>
            <person name="Brown J."/>
            <person name="Murnane C."/>
            <person name="Gray E."/>
            <person name="Humphries M."/>
            <person name="Sycamore N."/>
            <person name="Barker D."/>
            <person name="Saunders D."/>
            <person name="Wallis J."/>
            <person name="Babbage A."/>
            <person name="Hammond S."/>
            <person name="Mashreghi-Mohammadi M."/>
            <person name="Barr L."/>
            <person name="Martin S."/>
            <person name="Wray P."/>
            <person name="Ellington A."/>
            <person name="Matthews N."/>
            <person name="Ellwood M."/>
            <person name="Woodmansey R."/>
            <person name="Clark G."/>
            <person name="Cooper J."/>
            <person name="Tromans A."/>
            <person name="Grafham D."/>
            <person name="Skuce C."/>
            <person name="Pandian R."/>
            <person name="Andrews R."/>
            <person name="Harrison E."/>
            <person name="Kimberley A."/>
            <person name="Garnett J."/>
            <person name="Fosker N."/>
            <person name="Hall R."/>
            <person name="Garner P."/>
            <person name="Kelly D."/>
            <person name="Bird C."/>
            <person name="Palmer S."/>
            <person name="Gehring I."/>
            <person name="Berger A."/>
            <person name="Dooley C.M."/>
            <person name="Ersan-Urun Z."/>
            <person name="Eser C."/>
            <person name="Geiger H."/>
            <person name="Geisler M."/>
            <person name="Karotki L."/>
            <person name="Kirn A."/>
            <person name="Konantz J."/>
            <person name="Konantz M."/>
            <person name="Oberlander M."/>
            <person name="Rudolph-Geiger S."/>
            <person name="Teucke M."/>
            <person name="Lanz C."/>
            <person name="Raddatz G."/>
            <person name="Osoegawa K."/>
            <person name="Zhu B."/>
            <person name="Rapp A."/>
            <person name="Widaa S."/>
            <person name="Langford C."/>
            <person name="Yang F."/>
            <person name="Schuster S.C."/>
            <person name="Carter N.P."/>
            <person name="Harrow J."/>
            <person name="Ning Z."/>
            <person name="Herrero J."/>
            <person name="Searle S.M."/>
            <person name="Enright A."/>
            <person name="Geisler R."/>
            <person name="Plasterk R.H."/>
            <person name="Lee C."/>
            <person name="Westerfield M."/>
            <person name="de Jong P.J."/>
            <person name="Zon L.I."/>
            <person name="Postlethwait J.H."/>
            <person name="Nusslein-Volhard C."/>
            <person name="Hubbard T.J."/>
            <person name="Roest Crollius H."/>
            <person name="Rogers J."/>
            <person name="Stemple D.L."/>
        </authorList>
    </citation>
    <scope>NUCLEOTIDE SEQUENCE [LARGE SCALE GENOMIC DNA]</scope>
    <source>
        <strain>Tuebingen</strain>
    </source>
</reference>
<reference key="2">
    <citation type="submission" date="2007-04" db="EMBL/GenBank/DDBJ databases">
        <authorList>
            <consortium name="NIH - Zebrafish Gene Collection (ZGC) project"/>
        </authorList>
    </citation>
    <scope>NUCLEOTIDE SEQUENCE [LARGE SCALE MRNA] (ISOFORM 2)</scope>
    <source>
        <tissue>Embryo</tissue>
        <tissue>Ovary</tissue>
    </source>
</reference>
<reference key="3">
    <citation type="journal article" date="2007" name="Dev. Biol.">
        <title>Essential role of lysyl oxidases in notochord development.</title>
        <authorList>
            <person name="Gansner J.M."/>
            <person name="Mendelsohn B.A."/>
            <person name="Hultman K.A."/>
            <person name="Johnson S.L."/>
            <person name="Gitlin J.D."/>
        </authorList>
    </citation>
    <scope>NUCLEOTIDE SEQUENCE [MRNA] OF 540-807</scope>
</reference>
<reference key="4">
    <citation type="journal article" date="2011" name="Matrix Biol.">
        <title>Lysyl oxidase-like 3b is critical for cartilage maturation during zebrafish craniofacial development.</title>
        <authorList>
            <person name="van Boxtel A.L."/>
            <person name="Gansner J.M."/>
            <person name="Hakvoort H.W."/>
            <person name="Snell H."/>
            <person name="Legler J."/>
            <person name="Gitlin J.D."/>
        </authorList>
    </citation>
    <scope>FUNCTION</scope>
    <scope>DEVELOPMENTAL STAGE</scope>
    <scope>DISRUPTION PHENOTYPE</scope>
</reference>
<dbReference type="EC" id="1.4.3.-" evidence="3"/>
<dbReference type="EC" id="1.4.3.13" evidence="3"/>
<dbReference type="EMBL" id="BX323842">
    <property type="status" value="NOT_ANNOTATED_CDS"/>
    <property type="molecule type" value="Genomic_DNA"/>
</dbReference>
<dbReference type="EMBL" id="BX649269">
    <property type="status" value="NOT_ANNOTATED_CDS"/>
    <property type="molecule type" value="Genomic_DNA"/>
</dbReference>
<dbReference type="EMBL" id="BC090801">
    <property type="protein sequence ID" value="AAH90801.1"/>
    <property type="status" value="ALT_SEQ"/>
    <property type="molecule type" value="mRNA"/>
</dbReference>
<dbReference type="EMBL" id="BC139677">
    <property type="protein sequence ID" value="AAI39678.1"/>
    <property type="molecule type" value="mRNA"/>
</dbReference>
<dbReference type="EMBL" id="EF030484">
    <property type="protein sequence ID" value="ABM86970.1"/>
    <property type="molecule type" value="mRNA"/>
</dbReference>
<dbReference type="RefSeq" id="NP_001139156.1">
    <molecule id="B8A4W9-1"/>
    <property type="nucleotide sequence ID" value="NM_001145684.2"/>
</dbReference>
<dbReference type="SMR" id="B8A4W9"/>
<dbReference type="FunCoup" id="B8A4W9">
    <property type="interactions" value="572"/>
</dbReference>
<dbReference type="STRING" id="7955.ENSDARP00000109545"/>
<dbReference type="GlyCosmos" id="B8A4W9">
    <property type="glycosylation" value="4 sites, No reported glycans"/>
</dbReference>
<dbReference type="PaxDb" id="7955-ENSDARP00000109545"/>
<dbReference type="Ensembl" id="ENSDART00000129314">
    <molecule id="B8A4W9-1"/>
    <property type="protein sequence ID" value="ENSDARP00000109545"/>
    <property type="gene ID" value="ENSDARG00000039563"/>
</dbReference>
<dbReference type="GeneID" id="336266"/>
<dbReference type="KEGG" id="dre:336266"/>
<dbReference type="AGR" id="ZFIN:ZDB-GENE-030131-8210"/>
<dbReference type="CTD" id="336266"/>
<dbReference type="ZFIN" id="ZDB-GENE-030131-8210">
    <property type="gene designation" value="loxl3b"/>
</dbReference>
<dbReference type="eggNOG" id="ENOG502QSX8">
    <property type="taxonomic scope" value="Eukaryota"/>
</dbReference>
<dbReference type="HOGENOM" id="CLU_002555_3_0_1"/>
<dbReference type="InParanoid" id="B8A4W9"/>
<dbReference type="OMA" id="HWGLICG"/>
<dbReference type="OrthoDB" id="547291at2759"/>
<dbReference type="PhylomeDB" id="B8A4W9"/>
<dbReference type="TreeFam" id="TF326061"/>
<dbReference type="BRENDA" id="1.4.3.13">
    <property type="organism ID" value="928"/>
</dbReference>
<dbReference type="Reactome" id="R-DRE-2243919">
    <property type="pathway name" value="Crosslinking of collagen fibrils"/>
</dbReference>
<dbReference type="PRO" id="PR:B8A4W9"/>
<dbReference type="Proteomes" id="UP000000437">
    <property type="component" value="Chromosome 13"/>
</dbReference>
<dbReference type="Bgee" id="ENSDARG00000039563">
    <property type="expression patterns" value="Expressed in cranium and 45 other cell types or tissues"/>
</dbReference>
<dbReference type="GO" id="GO:0062023">
    <property type="term" value="C:collagen-containing extracellular matrix"/>
    <property type="evidence" value="ECO:0000318"/>
    <property type="project" value="GO_Central"/>
</dbReference>
<dbReference type="GO" id="GO:0005737">
    <property type="term" value="C:cytoplasm"/>
    <property type="evidence" value="ECO:0000250"/>
    <property type="project" value="UniProtKB"/>
</dbReference>
<dbReference type="GO" id="GO:0005615">
    <property type="term" value="C:extracellular space"/>
    <property type="evidence" value="ECO:0000250"/>
    <property type="project" value="UniProtKB"/>
</dbReference>
<dbReference type="GO" id="GO:0016020">
    <property type="term" value="C:membrane"/>
    <property type="evidence" value="ECO:0007669"/>
    <property type="project" value="InterPro"/>
</dbReference>
<dbReference type="GO" id="GO:0005634">
    <property type="term" value="C:nucleus"/>
    <property type="evidence" value="ECO:0000250"/>
    <property type="project" value="UniProtKB"/>
</dbReference>
<dbReference type="GO" id="GO:0005507">
    <property type="term" value="F:copper ion binding"/>
    <property type="evidence" value="ECO:0007669"/>
    <property type="project" value="InterPro"/>
</dbReference>
<dbReference type="GO" id="GO:0001968">
    <property type="term" value="F:fibronectin binding"/>
    <property type="evidence" value="ECO:0000250"/>
    <property type="project" value="UniProtKB"/>
</dbReference>
<dbReference type="GO" id="GO:0004720">
    <property type="term" value="F:protein-lysine 6-oxidase activity"/>
    <property type="evidence" value="ECO:0000250"/>
    <property type="project" value="UniProtKB"/>
</dbReference>
<dbReference type="GO" id="GO:0030199">
    <property type="term" value="P:collagen fibril organization"/>
    <property type="evidence" value="ECO:0000318"/>
    <property type="project" value="GO_Central"/>
</dbReference>
<dbReference type="GO" id="GO:0048703">
    <property type="term" value="P:embryonic viscerocranium morphogenesis"/>
    <property type="evidence" value="ECO:0000315"/>
    <property type="project" value="ZFIN"/>
</dbReference>
<dbReference type="GO" id="GO:1905590">
    <property type="term" value="P:fibronectin fibril organization"/>
    <property type="evidence" value="ECO:0000250"/>
    <property type="project" value="UniProtKB"/>
</dbReference>
<dbReference type="GO" id="GO:0006954">
    <property type="term" value="P:inflammatory response"/>
    <property type="evidence" value="ECO:0000250"/>
    <property type="project" value="UniProtKB"/>
</dbReference>
<dbReference type="GO" id="GO:0030324">
    <property type="term" value="P:lung development"/>
    <property type="evidence" value="ECO:0000250"/>
    <property type="project" value="UniProtKB"/>
</dbReference>
<dbReference type="GO" id="GO:2000329">
    <property type="term" value="P:negative regulation of T-helper 17 cell lineage commitment"/>
    <property type="evidence" value="ECO:0000250"/>
    <property type="project" value="UniProtKB"/>
</dbReference>
<dbReference type="GO" id="GO:0018057">
    <property type="term" value="P:peptidyl-lysine oxidation"/>
    <property type="evidence" value="ECO:0000250"/>
    <property type="project" value="UniProtKB"/>
</dbReference>
<dbReference type="GO" id="GO:2001046">
    <property type="term" value="P:positive regulation of integrin-mediated signaling pathway"/>
    <property type="evidence" value="ECO:0000250"/>
    <property type="project" value="UniProtKB"/>
</dbReference>
<dbReference type="GO" id="GO:0060021">
    <property type="term" value="P:roof of mouth development"/>
    <property type="evidence" value="ECO:0000250"/>
    <property type="project" value="UniProtKB"/>
</dbReference>
<dbReference type="GO" id="GO:0061053">
    <property type="term" value="P:somite development"/>
    <property type="evidence" value="ECO:0000250"/>
    <property type="project" value="UniProtKB"/>
</dbReference>
<dbReference type="GO" id="GO:0021510">
    <property type="term" value="P:spinal cord development"/>
    <property type="evidence" value="ECO:0000250"/>
    <property type="project" value="UniProtKB"/>
</dbReference>
<dbReference type="FunFam" id="3.10.250.10:FF:000001">
    <property type="entry name" value="Lysyl oxidase 4 isoform X1"/>
    <property type="match status" value="2"/>
</dbReference>
<dbReference type="FunFam" id="3.10.250.10:FF:000008">
    <property type="entry name" value="Lysyl oxidase homolog 2"/>
    <property type="match status" value="1"/>
</dbReference>
<dbReference type="FunFam" id="3.10.250.10:FF:000067">
    <property type="entry name" value="Lysyl oxidase homolog 3A"/>
    <property type="match status" value="1"/>
</dbReference>
<dbReference type="Gene3D" id="3.10.250.10">
    <property type="entry name" value="SRCR-like domain"/>
    <property type="match status" value="5"/>
</dbReference>
<dbReference type="InterPro" id="IPR050912">
    <property type="entry name" value="LOX-like_protein"/>
</dbReference>
<dbReference type="InterPro" id="IPR001695">
    <property type="entry name" value="Lysyl_oxidase"/>
</dbReference>
<dbReference type="InterPro" id="IPR019828">
    <property type="entry name" value="Lysyl_oxidase_CS"/>
</dbReference>
<dbReference type="InterPro" id="IPR001190">
    <property type="entry name" value="SRCR"/>
</dbReference>
<dbReference type="InterPro" id="IPR036772">
    <property type="entry name" value="SRCR-like_dom_sf"/>
</dbReference>
<dbReference type="PANTHER" id="PTHR45817:SF2">
    <property type="entry name" value="LYSYL OXIDASE HOMOLOG 3"/>
    <property type="match status" value="1"/>
</dbReference>
<dbReference type="PANTHER" id="PTHR45817">
    <property type="entry name" value="LYSYL OXIDASE-LIKE-RELATED"/>
    <property type="match status" value="1"/>
</dbReference>
<dbReference type="Pfam" id="PF01186">
    <property type="entry name" value="Lysyl_oxidase"/>
    <property type="match status" value="1"/>
</dbReference>
<dbReference type="Pfam" id="PF00530">
    <property type="entry name" value="SRCR"/>
    <property type="match status" value="5"/>
</dbReference>
<dbReference type="PRINTS" id="PR00074">
    <property type="entry name" value="LYSYLOXIDASE"/>
</dbReference>
<dbReference type="PRINTS" id="PR00258">
    <property type="entry name" value="SPERACTRCPTR"/>
</dbReference>
<dbReference type="SMART" id="SM00202">
    <property type="entry name" value="SR"/>
    <property type="match status" value="4"/>
</dbReference>
<dbReference type="SUPFAM" id="SSF56487">
    <property type="entry name" value="SRCR-like"/>
    <property type="match status" value="5"/>
</dbReference>
<dbReference type="PROSITE" id="PS00926">
    <property type="entry name" value="LYSYL_OXIDASE"/>
    <property type="match status" value="1"/>
</dbReference>
<dbReference type="PROSITE" id="PS00420">
    <property type="entry name" value="SRCR_1"/>
    <property type="match status" value="2"/>
</dbReference>
<dbReference type="PROSITE" id="PS50287">
    <property type="entry name" value="SRCR_2"/>
    <property type="match status" value="5"/>
</dbReference>
<keyword id="KW-0025">Alternative splicing</keyword>
<keyword id="KW-0186">Copper</keyword>
<keyword id="KW-0963">Cytoplasm</keyword>
<keyword id="KW-1015">Disulfide bond</keyword>
<keyword id="KW-0325">Glycoprotein</keyword>
<keyword id="KW-0886">LTQ</keyword>
<keyword id="KW-0479">Metal-binding</keyword>
<keyword id="KW-0539">Nucleus</keyword>
<keyword id="KW-0560">Oxidoreductase</keyword>
<keyword id="KW-1185">Reference proteome</keyword>
<keyword id="KW-0677">Repeat</keyword>
<keyword id="KW-0964">Secreted</keyword>
<keyword id="KW-0732">Signal</keyword>
<keyword id="KW-0801">TPQ</keyword>
<feature type="signal peptide" evidence="5">
    <location>
        <begin position="1"/>
        <end position="24"/>
    </location>
</feature>
<feature type="chain" id="PRO_5002867496" description="Lysyl oxidase homolog 3B" evidence="5">
    <location>
        <begin position="25"/>
        <end position="807"/>
    </location>
</feature>
<feature type="domain" description="SRCR 1" evidence="6">
    <location>
        <begin position="49"/>
        <end position="150"/>
    </location>
</feature>
<feature type="domain" description="SRCR 2" evidence="6">
    <location>
        <begin position="175"/>
        <end position="288"/>
    </location>
</feature>
<feature type="domain" description="SRCR 3" evidence="6">
    <location>
        <begin position="309"/>
        <end position="409"/>
    </location>
</feature>
<feature type="domain" description="SRCR 4" evidence="6">
    <location>
        <begin position="419"/>
        <end position="470"/>
    </location>
</feature>
<feature type="domain" description="SRCR 5" evidence="6">
    <location>
        <begin position="476"/>
        <end position="579"/>
    </location>
</feature>
<feature type="modified residue" description="2',4',5'-topaquinone" evidence="2">
    <location>
        <position position="724"/>
    </location>
</feature>
<feature type="glycosylation site" description="N-linked (GlcNAc...) asparagine" evidence="7">
    <location>
        <position position="272"/>
    </location>
</feature>
<feature type="glycosylation site" description="N-linked (GlcNAc...) asparagine" evidence="7">
    <location>
        <position position="392"/>
    </location>
</feature>
<feature type="glycosylation site" description="N-linked (GlcNAc...) asparagine" evidence="7">
    <location>
        <position position="536"/>
    </location>
</feature>
<feature type="glycosylation site" description="N-linked (GlcNAc...) asparagine" evidence="7">
    <location>
        <position position="679"/>
    </location>
</feature>
<feature type="disulfide bond" evidence="6">
    <location>
        <begin position="75"/>
        <end position="139"/>
    </location>
</feature>
<feature type="disulfide bond" evidence="6">
    <location>
        <begin position="88"/>
        <end position="149"/>
    </location>
</feature>
<feature type="disulfide bond" evidence="6">
    <location>
        <begin position="119"/>
        <end position="129"/>
    </location>
</feature>
<feature type="disulfide bond" evidence="6">
    <location>
        <begin position="207"/>
        <end position="277"/>
    </location>
</feature>
<feature type="disulfide bond" evidence="6">
    <location>
        <begin position="220"/>
        <end position="287"/>
    </location>
</feature>
<feature type="disulfide bond" evidence="6">
    <location>
        <begin position="254"/>
        <end position="264"/>
    </location>
</feature>
<feature type="disulfide bond" evidence="6">
    <location>
        <begin position="334"/>
        <end position="398"/>
    </location>
</feature>
<feature type="disulfide bond" evidence="6">
    <location>
        <begin position="347"/>
        <end position="408"/>
    </location>
</feature>
<feature type="disulfide bond" evidence="6">
    <location>
        <begin position="378"/>
        <end position="388"/>
    </location>
</feature>
<feature type="disulfide bond" evidence="6">
    <location>
        <begin position="514"/>
        <end position="578"/>
    </location>
</feature>
<feature type="disulfide bond" evidence="6">
    <location>
        <begin position="547"/>
        <end position="557"/>
    </location>
</feature>
<feature type="cross-link" description="Lysine tyrosylquinone (Lys-Tyr)" evidence="2">
    <location>
        <begin position="688"/>
        <end position="724"/>
    </location>
</feature>
<feature type="splice variant" id="VSP_058831" description="In isoform 2.">
    <location>
        <begin position="1"/>
        <end position="666"/>
    </location>
</feature>
<feature type="sequence conflict" description="In Ref. 2; AAI39678 and 3; ABM86970." evidence="10" ref="2 3">
    <original>K</original>
    <variation>E</variation>
    <location>
        <position position="707"/>
    </location>
</feature>
<feature type="sequence conflict" description="In Ref. 2; AAI39678." evidence="10" ref="2">
    <original>D</original>
    <variation>V</variation>
    <location>
        <position position="729"/>
    </location>
</feature>